<sequence>MTTDMTWAQTIILSLIQGLTEFLPVSSSGHLRIFSTLLWGEDAGASFTAVIQLGTELAVLVFFAKDIWNIASAWCKGVWEWLTDLTGKHGRRVHRQSFDYRMGWMVIVGTLPVAVLGYLGKDLIRDNLRNLWITATMLVLFSFVFILAERMGRRERSFDELTMRDSVIMGFAQCLALIPGVSRSGGTVSAGLFLNLDREVATRYSFLLAIPAVLASGLFSLPDAFSPDAGQAASGAQLFVGTAIAFAVGYASIAWLLKFVANHSFAWFALWRIPLGLAVMGLLAFGVLQA</sequence>
<proteinExistence type="inferred from homology"/>
<name>UPPP2_CORJK</name>
<reference key="1">
    <citation type="journal article" date="2005" name="J. Bacteriol.">
        <title>Complete genome sequence and analysis of the multiresistant nosocomial pathogen Corynebacterium jeikeium K411, a lipid-requiring bacterium of the human skin flora.</title>
        <authorList>
            <person name="Tauch A."/>
            <person name="Kaiser O."/>
            <person name="Hain T."/>
            <person name="Goesmann A."/>
            <person name="Weisshaar B."/>
            <person name="Albersmeier A."/>
            <person name="Bekel T."/>
            <person name="Bischoff N."/>
            <person name="Brune I."/>
            <person name="Chakraborty T."/>
            <person name="Kalinowski J."/>
            <person name="Meyer F."/>
            <person name="Rupp O."/>
            <person name="Schneiker S."/>
            <person name="Viehoever P."/>
            <person name="Puehler A."/>
        </authorList>
    </citation>
    <scope>NUCLEOTIDE SEQUENCE [LARGE SCALE GENOMIC DNA]</scope>
    <source>
        <strain>K411</strain>
    </source>
</reference>
<gene>
    <name evidence="1" type="primary">uppP2</name>
    <name type="ordered locus">jk0957</name>
</gene>
<keyword id="KW-0046">Antibiotic resistance</keyword>
<keyword id="KW-1003">Cell membrane</keyword>
<keyword id="KW-0133">Cell shape</keyword>
<keyword id="KW-0961">Cell wall biogenesis/degradation</keyword>
<keyword id="KW-0378">Hydrolase</keyword>
<keyword id="KW-0472">Membrane</keyword>
<keyword id="KW-0573">Peptidoglycan synthesis</keyword>
<keyword id="KW-1185">Reference proteome</keyword>
<keyword id="KW-0812">Transmembrane</keyword>
<keyword id="KW-1133">Transmembrane helix</keyword>
<protein>
    <recommendedName>
        <fullName evidence="1">Undecaprenyl-diphosphatase 2</fullName>
        <ecNumber evidence="1">3.6.1.27</ecNumber>
    </recommendedName>
    <alternativeName>
        <fullName evidence="1">Bacitracin resistance protein 2</fullName>
    </alternativeName>
    <alternativeName>
        <fullName evidence="1">Undecaprenyl pyrophosphate phosphatase 2</fullName>
    </alternativeName>
</protein>
<feature type="chain" id="PRO_0000227616" description="Undecaprenyl-diphosphatase 2">
    <location>
        <begin position="1"/>
        <end position="290"/>
    </location>
</feature>
<feature type="transmembrane region" description="Helical" evidence="1">
    <location>
        <begin position="104"/>
        <end position="124"/>
    </location>
</feature>
<feature type="transmembrane region" description="Helical" evidence="1">
    <location>
        <begin position="128"/>
        <end position="148"/>
    </location>
</feature>
<feature type="transmembrane region" description="Helical" evidence="1">
    <location>
        <begin position="174"/>
        <end position="194"/>
    </location>
</feature>
<feature type="transmembrane region" description="Helical" evidence="1">
    <location>
        <begin position="205"/>
        <end position="225"/>
    </location>
</feature>
<feature type="transmembrane region" description="Helical" evidence="1">
    <location>
        <begin position="237"/>
        <end position="257"/>
    </location>
</feature>
<feature type="transmembrane region" description="Helical" evidence="1">
    <location>
        <begin position="268"/>
        <end position="288"/>
    </location>
</feature>
<dbReference type="EC" id="3.6.1.27" evidence="1"/>
<dbReference type="EMBL" id="CR931997">
    <property type="protein sequence ID" value="CAI37121.1"/>
    <property type="molecule type" value="Genomic_DNA"/>
</dbReference>
<dbReference type="RefSeq" id="WP_011273537.1">
    <property type="nucleotide sequence ID" value="NC_007164.1"/>
</dbReference>
<dbReference type="SMR" id="Q4JVN6"/>
<dbReference type="STRING" id="306537.jk0957"/>
<dbReference type="KEGG" id="cjk:jk0957"/>
<dbReference type="PATRIC" id="fig|306537.10.peg.968"/>
<dbReference type="eggNOG" id="COG1968">
    <property type="taxonomic scope" value="Bacteria"/>
</dbReference>
<dbReference type="HOGENOM" id="CLU_060296_1_0_11"/>
<dbReference type="OrthoDB" id="9808289at2"/>
<dbReference type="Proteomes" id="UP000000545">
    <property type="component" value="Chromosome"/>
</dbReference>
<dbReference type="GO" id="GO:0005886">
    <property type="term" value="C:plasma membrane"/>
    <property type="evidence" value="ECO:0007669"/>
    <property type="project" value="UniProtKB-SubCell"/>
</dbReference>
<dbReference type="GO" id="GO:0050380">
    <property type="term" value="F:undecaprenyl-diphosphatase activity"/>
    <property type="evidence" value="ECO:0007669"/>
    <property type="project" value="UniProtKB-UniRule"/>
</dbReference>
<dbReference type="GO" id="GO:0071555">
    <property type="term" value="P:cell wall organization"/>
    <property type="evidence" value="ECO:0007669"/>
    <property type="project" value="UniProtKB-KW"/>
</dbReference>
<dbReference type="GO" id="GO:0009252">
    <property type="term" value="P:peptidoglycan biosynthetic process"/>
    <property type="evidence" value="ECO:0007669"/>
    <property type="project" value="UniProtKB-KW"/>
</dbReference>
<dbReference type="GO" id="GO:0008360">
    <property type="term" value="P:regulation of cell shape"/>
    <property type="evidence" value="ECO:0007669"/>
    <property type="project" value="UniProtKB-KW"/>
</dbReference>
<dbReference type="GO" id="GO:0046677">
    <property type="term" value="P:response to antibiotic"/>
    <property type="evidence" value="ECO:0007669"/>
    <property type="project" value="UniProtKB-UniRule"/>
</dbReference>
<dbReference type="HAMAP" id="MF_01006">
    <property type="entry name" value="Undec_diphosphatase"/>
    <property type="match status" value="1"/>
</dbReference>
<dbReference type="InterPro" id="IPR003824">
    <property type="entry name" value="UppP"/>
</dbReference>
<dbReference type="NCBIfam" id="NF001392">
    <property type="entry name" value="PRK00281.2-1"/>
    <property type="match status" value="1"/>
</dbReference>
<dbReference type="NCBIfam" id="TIGR00753">
    <property type="entry name" value="undec_PP_bacA"/>
    <property type="match status" value="1"/>
</dbReference>
<dbReference type="PANTHER" id="PTHR30622">
    <property type="entry name" value="UNDECAPRENYL-DIPHOSPHATASE"/>
    <property type="match status" value="1"/>
</dbReference>
<dbReference type="PANTHER" id="PTHR30622:SF4">
    <property type="entry name" value="UNDECAPRENYL-DIPHOSPHATASE"/>
    <property type="match status" value="1"/>
</dbReference>
<dbReference type="Pfam" id="PF02673">
    <property type="entry name" value="BacA"/>
    <property type="match status" value="1"/>
</dbReference>
<accession>Q4JVN6</accession>
<organism>
    <name type="scientific">Corynebacterium jeikeium (strain K411)</name>
    <dbReference type="NCBI Taxonomy" id="306537"/>
    <lineage>
        <taxon>Bacteria</taxon>
        <taxon>Bacillati</taxon>
        <taxon>Actinomycetota</taxon>
        <taxon>Actinomycetes</taxon>
        <taxon>Mycobacteriales</taxon>
        <taxon>Corynebacteriaceae</taxon>
        <taxon>Corynebacterium</taxon>
    </lineage>
</organism>
<comment type="function">
    <text evidence="1">Catalyzes the dephosphorylation of undecaprenyl diphosphate (UPP). Confers resistance to bacitracin.</text>
</comment>
<comment type="catalytic activity">
    <reaction evidence="1">
        <text>di-trans,octa-cis-undecaprenyl diphosphate + H2O = di-trans,octa-cis-undecaprenyl phosphate + phosphate + H(+)</text>
        <dbReference type="Rhea" id="RHEA:28094"/>
        <dbReference type="ChEBI" id="CHEBI:15377"/>
        <dbReference type="ChEBI" id="CHEBI:15378"/>
        <dbReference type="ChEBI" id="CHEBI:43474"/>
        <dbReference type="ChEBI" id="CHEBI:58405"/>
        <dbReference type="ChEBI" id="CHEBI:60392"/>
        <dbReference type="EC" id="3.6.1.27"/>
    </reaction>
</comment>
<comment type="subcellular location">
    <subcellularLocation>
        <location evidence="1">Cell membrane</location>
        <topology evidence="1">Multi-pass membrane protein</topology>
    </subcellularLocation>
</comment>
<comment type="miscellaneous">
    <text>Bacitracin is thought to be involved in the inhibition of peptidoglycan synthesis by sequestering undecaprenyl diphosphate, thereby reducing the pool of lipid carrier available.</text>
</comment>
<comment type="similarity">
    <text evidence="1">Belongs to the UppP family.</text>
</comment>
<evidence type="ECO:0000255" key="1">
    <source>
        <dbReference type="HAMAP-Rule" id="MF_01006"/>
    </source>
</evidence>